<protein>
    <recommendedName>
        <fullName>Cytochrome P450 6B5</fullName>
        <ecNumber>1.14.14.1</ecNumber>
    </recommendedName>
    <alternativeName>
        <fullName>CYP6B5v1</fullName>
    </alternativeName>
    <alternativeName>
        <fullName>CYPVIB5</fullName>
    </alternativeName>
</protein>
<evidence type="ECO:0000250" key="1"/>
<evidence type="ECO:0000305" key="2"/>
<comment type="function">
    <text>Enables the insect to feed on furanocoumarin-producing plants and evolved as an adaptation for detoxification of xanthotoxin and other furanocoumarins.</text>
</comment>
<comment type="catalytic activity">
    <reaction>
        <text>an organic molecule + reduced [NADPH--hemoprotein reductase] + O2 = an alcohol + oxidized [NADPH--hemoprotein reductase] + H2O + H(+)</text>
        <dbReference type="Rhea" id="RHEA:17149"/>
        <dbReference type="Rhea" id="RHEA-COMP:11964"/>
        <dbReference type="Rhea" id="RHEA-COMP:11965"/>
        <dbReference type="ChEBI" id="CHEBI:15377"/>
        <dbReference type="ChEBI" id="CHEBI:15378"/>
        <dbReference type="ChEBI" id="CHEBI:15379"/>
        <dbReference type="ChEBI" id="CHEBI:30879"/>
        <dbReference type="ChEBI" id="CHEBI:57618"/>
        <dbReference type="ChEBI" id="CHEBI:58210"/>
        <dbReference type="ChEBI" id="CHEBI:142491"/>
        <dbReference type="EC" id="1.14.14.1"/>
    </reaction>
</comment>
<comment type="cofactor">
    <cofactor evidence="1">
        <name>heme</name>
        <dbReference type="ChEBI" id="CHEBI:30413"/>
    </cofactor>
</comment>
<comment type="subcellular location">
    <subcellularLocation>
        <location>Endoplasmic reticulum membrane</location>
        <topology>Peripheral membrane protein</topology>
    </subcellularLocation>
    <subcellularLocation>
        <location>Microsome membrane</location>
        <topology>Peripheral membrane protein</topology>
    </subcellularLocation>
</comment>
<comment type="induction">
    <text>By furnocoumarin.</text>
</comment>
<comment type="similarity">
    <text evidence="2">Belongs to the cytochrome P450 family.</text>
</comment>
<dbReference type="EC" id="1.14.14.1"/>
<dbReference type="EMBL" id="U65490">
    <property type="protein sequence ID" value="AAB06743.1"/>
    <property type="molecule type" value="Genomic_DNA"/>
</dbReference>
<dbReference type="SMR" id="Q95036"/>
<dbReference type="GO" id="GO:0005789">
    <property type="term" value="C:endoplasmic reticulum membrane"/>
    <property type="evidence" value="ECO:0007669"/>
    <property type="project" value="UniProtKB-SubCell"/>
</dbReference>
<dbReference type="GO" id="GO:0020037">
    <property type="term" value="F:heme binding"/>
    <property type="evidence" value="ECO:0007669"/>
    <property type="project" value="InterPro"/>
</dbReference>
<dbReference type="GO" id="GO:0005506">
    <property type="term" value="F:iron ion binding"/>
    <property type="evidence" value="ECO:0007669"/>
    <property type="project" value="InterPro"/>
</dbReference>
<dbReference type="GO" id="GO:0016712">
    <property type="term" value="F:oxidoreductase activity, acting on paired donors, with incorporation or reduction of molecular oxygen, reduced flavin or flavoprotein as one donor, and incorporation of one atom of oxygen"/>
    <property type="evidence" value="ECO:0007669"/>
    <property type="project" value="UniProtKB-EC"/>
</dbReference>
<dbReference type="CDD" id="cd11056">
    <property type="entry name" value="CYP6-like"/>
    <property type="match status" value="1"/>
</dbReference>
<dbReference type="FunFam" id="1.10.630.10:FF:000042">
    <property type="entry name" value="Cytochrome P450"/>
    <property type="match status" value="1"/>
</dbReference>
<dbReference type="Gene3D" id="1.10.630.10">
    <property type="entry name" value="Cytochrome P450"/>
    <property type="match status" value="1"/>
</dbReference>
<dbReference type="InterPro" id="IPR001128">
    <property type="entry name" value="Cyt_P450"/>
</dbReference>
<dbReference type="InterPro" id="IPR017972">
    <property type="entry name" value="Cyt_P450_CS"/>
</dbReference>
<dbReference type="InterPro" id="IPR002401">
    <property type="entry name" value="Cyt_P450_E_grp-I"/>
</dbReference>
<dbReference type="InterPro" id="IPR036396">
    <property type="entry name" value="Cyt_P450_sf"/>
</dbReference>
<dbReference type="InterPro" id="IPR050476">
    <property type="entry name" value="Insect_CytP450_Detox"/>
</dbReference>
<dbReference type="PANTHER" id="PTHR24292:SF54">
    <property type="entry name" value="CYP9F3-RELATED"/>
    <property type="match status" value="1"/>
</dbReference>
<dbReference type="PANTHER" id="PTHR24292">
    <property type="entry name" value="CYTOCHROME P450"/>
    <property type="match status" value="1"/>
</dbReference>
<dbReference type="Pfam" id="PF00067">
    <property type="entry name" value="p450"/>
    <property type="match status" value="1"/>
</dbReference>
<dbReference type="PRINTS" id="PR00463">
    <property type="entry name" value="EP450I"/>
</dbReference>
<dbReference type="PRINTS" id="PR00385">
    <property type="entry name" value="P450"/>
</dbReference>
<dbReference type="SUPFAM" id="SSF48264">
    <property type="entry name" value="Cytochrome P450"/>
    <property type="match status" value="1"/>
</dbReference>
<dbReference type="PROSITE" id="PS00086">
    <property type="entry name" value="CYTOCHROME_P450"/>
    <property type="match status" value="1"/>
</dbReference>
<reference key="1">
    <citation type="journal article" date="1996" name="Proc. Natl. Acad. Sci. U.S.A.">
        <title>Conserved promoter elements in the CYP6B gene family suggest common ancestry for cytochrome P450 monooxygenases mediating furanocoumarin detoxification.</title>
        <authorList>
            <person name="Hung C.F."/>
            <person name="Holzmacher R."/>
            <person name="Connolly E."/>
            <person name="Berenbaum M.R."/>
            <person name="Schuler M.A."/>
        </authorList>
    </citation>
    <scope>NUCLEOTIDE SEQUENCE [GENOMIC DNA]</scope>
</reference>
<accession>Q95036</accession>
<keyword id="KW-0256">Endoplasmic reticulum</keyword>
<keyword id="KW-0349">Heme</keyword>
<keyword id="KW-0408">Iron</keyword>
<keyword id="KW-0472">Membrane</keyword>
<keyword id="KW-0479">Metal-binding</keyword>
<keyword id="KW-0492">Microsome</keyword>
<keyword id="KW-0503">Monooxygenase</keyword>
<keyword id="KW-0560">Oxidoreductase</keyword>
<proteinExistence type="evidence at transcript level"/>
<gene>
    <name type="primary">CYP6B5</name>
</gene>
<feature type="chain" id="PRO_0000051897" description="Cytochrome P450 6B5">
    <location>
        <begin position="1"/>
        <end position="476" status="greater than"/>
    </location>
</feature>
<feature type="binding site" description="axial binding residue" evidence="1">
    <location>
        <position position="443"/>
    </location>
    <ligand>
        <name>heme</name>
        <dbReference type="ChEBI" id="CHEBI:30413"/>
    </ligand>
    <ligandPart>
        <name>Fe</name>
        <dbReference type="ChEBI" id="CHEBI:18248"/>
    </ligandPart>
</feature>
<feature type="non-terminal residue">
    <location>
        <position position="476"/>
    </location>
</feature>
<name>CP6B5_PAPGL</name>
<organism>
    <name type="scientific">Papilio glaucus</name>
    <name type="common">Eastern tiger swallowtail butterfly</name>
    <name type="synonym">Pterourus glaucus</name>
    <dbReference type="NCBI Taxonomy" id="45779"/>
    <lineage>
        <taxon>Eukaryota</taxon>
        <taxon>Metazoa</taxon>
        <taxon>Ecdysozoa</taxon>
        <taxon>Arthropoda</taxon>
        <taxon>Hexapoda</taxon>
        <taxon>Insecta</taxon>
        <taxon>Pterygota</taxon>
        <taxon>Neoptera</taxon>
        <taxon>Endopterygota</taxon>
        <taxon>Lepidoptera</taxon>
        <taxon>Glossata</taxon>
        <taxon>Ditrysia</taxon>
        <taxon>Papilionoidea</taxon>
        <taxon>Papilionidae</taxon>
        <taxon>Papilioninae</taxon>
        <taxon>Papilio</taxon>
        <taxon>Pterourus</taxon>
    </lineage>
</organism>
<sequence length="476" mass="55102">MLTIFIVTATLFAILYLYFTRNFNYWKDRNVVGPEPTVFFGNIMESVIRRKHLIMIYKDIYEAFPKEKVVGIYRMTTPCLLLRDLDVIKHVMIKDFDLFNDRGVEFSEEGLGLNIFHADGDRWRVLRQCFTPLFTSGKLKNMLNLMSDRGDKFIKMVEKICDKEPEQQIIPLVRKFTMASITTCAFGMELDEEMIETLDKLDSLIFTTSYGNEIDMMYPGILKKLNSSLFSKMIAPFFDNLTKTIIEQRGGKPTNRKDLMDLILELRQKKAIEPMKKTHDEQVTTLELTDSVIAAQTFIFYAAGYETSASTMSFLLFELAENPDIQEKVIAEVDETLKRHNGEITYDTLSEMTYLTQVFHETLRKYPVADILLRNAKADYAVPGTNVTLKKGQTVVVSGFGIHYDPKYYPDPEKFDPERFSPENVRNRHPCAYIPFGAGQRKCLGMRFGQWQVQVCIIKLLSKFRFEPSTKTMSEF</sequence>